<feature type="chain" id="PRO_0000093906" description="RNA polymerase sigma factor RpoD">
    <location>
        <begin position="1"/>
        <end position="615"/>
    </location>
</feature>
<feature type="DNA-binding region" description="H-T-H motif" evidence="1">
    <location>
        <begin position="575"/>
        <end position="594"/>
    </location>
</feature>
<feature type="region of interest" description="Disordered" evidence="2">
    <location>
        <begin position="166"/>
        <end position="216"/>
    </location>
</feature>
<feature type="region of interest" description="Sigma-70 factor domain-2" evidence="1">
    <location>
        <begin position="381"/>
        <end position="451"/>
    </location>
</feature>
<feature type="region of interest" description="Sigma-70 factor domain-3" evidence="1">
    <location>
        <begin position="460"/>
        <end position="536"/>
    </location>
</feature>
<feature type="region of interest" description="Sigma-70 factor domain-4" evidence="1">
    <location>
        <begin position="549"/>
        <end position="602"/>
    </location>
</feature>
<feature type="short sequence motif" description="Interaction with polymerase core subunit RpoC">
    <location>
        <begin position="405"/>
        <end position="408"/>
    </location>
</feature>
<feature type="compositionally biased region" description="Acidic residues" evidence="2">
    <location>
        <begin position="194"/>
        <end position="212"/>
    </location>
</feature>
<proteinExistence type="inferred from homology"/>
<sequence>MSGKAQQQSRLKELISRGREQGYLTYAEVNDHLPEDISDPEQVEDIIRMINDMGINVFESAPDADALLLAEADTDEAAAEEAAAALAAVETDIGRTTDPVRMYMREMGTVELLTREGEIEIAKRIEEGIREVMGAIAHFPGTVDHILSEYTRVTTEGGRLSDVLSGYIDPDDGITPPAAEVPPPVDTKTAKADDDSEDEEAEATEDEEEAESGPDPVIAAQRFGAVADQMEVTRKALKKHGRENKQAIAEMLALAELFMPIKLVPKQFEGLVERVRSALDRLRQQERAIMQLCVRDARMPRADFLRQFPGNEVDESWTDALAKGKSKYAEAIARLQPDIIRCQQKLTALEVETGLKIAEIKDINRRMSIGEAKARRAKKEMVEANLRLVISIAKKYTNRGLQFLDLIQEGNIGLMKAVDKFEYRRGYKFSTYATWWIRQAITRSIADQARTIRIPVHMIETINKLNRISRQMLQEMGREPTPEELGERMEMPEDKIRKVLKIAKEPISMETPIGDDEDSHLGDFIEDSTMQSPIDVATVESLKEATREVLSGLTAREAKVLRMRFGIDMNTDHTLEEVGKQFDVTRERIRQIEAKALRKLRHPTRSEHLRSFLDE</sequence>
<dbReference type="EMBL" id="X84416">
    <property type="protein sequence ID" value="CAA59134.1"/>
    <property type="molecule type" value="Genomic_DNA"/>
</dbReference>
<dbReference type="PIR" id="S58230">
    <property type="entry name" value="S58230"/>
</dbReference>
<dbReference type="RefSeq" id="WP_011063840.1">
    <property type="nucleotide sequence ID" value="NZ_LS999205.1"/>
</dbReference>
<dbReference type="SMR" id="P52326"/>
<dbReference type="GeneID" id="57478613"/>
<dbReference type="PATRIC" id="fig|1124983.3.peg.5643"/>
<dbReference type="eggNOG" id="COG0568">
    <property type="taxonomic scope" value="Bacteria"/>
</dbReference>
<dbReference type="GO" id="GO:0005737">
    <property type="term" value="C:cytoplasm"/>
    <property type="evidence" value="ECO:0007669"/>
    <property type="project" value="UniProtKB-SubCell"/>
</dbReference>
<dbReference type="GO" id="GO:0003677">
    <property type="term" value="F:DNA binding"/>
    <property type="evidence" value="ECO:0007669"/>
    <property type="project" value="UniProtKB-UniRule"/>
</dbReference>
<dbReference type="GO" id="GO:0016987">
    <property type="term" value="F:sigma factor activity"/>
    <property type="evidence" value="ECO:0007669"/>
    <property type="project" value="UniProtKB-UniRule"/>
</dbReference>
<dbReference type="GO" id="GO:0006352">
    <property type="term" value="P:DNA-templated transcription initiation"/>
    <property type="evidence" value="ECO:0007669"/>
    <property type="project" value="UniProtKB-UniRule"/>
</dbReference>
<dbReference type="CDD" id="cd06171">
    <property type="entry name" value="Sigma70_r4"/>
    <property type="match status" value="1"/>
</dbReference>
<dbReference type="FunFam" id="1.10.220.120:FF:000001">
    <property type="entry name" value="RNA polymerase sigma factor RpoD"/>
    <property type="match status" value="1"/>
</dbReference>
<dbReference type="FunFam" id="1.10.601.10:FF:000002">
    <property type="entry name" value="RNA polymerase sigma factor RpoD"/>
    <property type="match status" value="1"/>
</dbReference>
<dbReference type="FunFam" id="1.10.10.10:FF:000002">
    <property type="entry name" value="RNA polymerase sigma factor SigA"/>
    <property type="match status" value="1"/>
</dbReference>
<dbReference type="FunFam" id="1.10.10.10:FF:000004">
    <property type="entry name" value="RNA polymerase sigma factor SigA"/>
    <property type="match status" value="1"/>
</dbReference>
<dbReference type="Gene3D" id="1.10.601.10">
    <property type="entry name" value="RNA Polymerase Primary Sigma Factor"/>
    <property type="match status" value="1"/>
</dbReference>
<dbReference type="Gene3D" id="1.10.220.120">
    <property type="entry name" value="Sigma-70 factor, region 1.1"/>
    <property type="match status" value="1"/>
</dbReference>
<dbReference type="Gene3D" id="1.10.10.10">
    <property type="entry name" value="Winged helix-like DNA-binding domain superfamily/Winged helix DNA-binding domain"/>
    <property type="match status" value="2"/>
</dbReference>
<dbReference type="HAMAP" id="MF_00963">
    <property type="entry name" value="Sigma70_RpoD_SigA"/>
    <property type="match status" value="1"/>
</dbReference>
<dbReference type="InterPro" id="IPR014284">
    <property type="entry name" value="RNA_pol_sigma-70_dom"/>
</dbReference>
<dbReference type="InterPro" id="IPR000943">
    <property type="entry name" value="RNA_pol_sigma70"/>
</dbReference>
<dbReference type="InterPro" id="IPR009042">
    <property type="entry name" value="RNA_pol_sigma70_r1_2"/>
</dbReference>
<dbReference type="InterPro" id="IPR007627">
    <property type="entry name" value="RNA_pol_sigma70_r2"/>
</dbReference>
<dbReference type="InterPro" id="IPR007624">
    <property type="entry name" value="RNA_pol_sigma70_r3"/>
</dbReference>
<dbReference type="InterPro" id="IPR007630">
    <property type="entry name" value="RNA_pol_sigma70_r4"/>
</dbReference>
<dbReference type="InterPro" id="IPR007631">
    <property type="entry name" value="RNA_pol_sigma_70_non-ess"/>
</dbReference>
<dbReference type="InterPro" id="IPR007127">
    <property type="entry name" value="RNA_pol_sigma_70_r1_1"/>
</dbReference>
<dbReference type="InterPro" id="IPR042189">
    <property type="entry name" value="RNA_pol_sigma_70_r1_1_sf"/>
</dbReference>
<dbReference type="InterPro" id="IPR013325">
    <property type="entry name" value="RNA_pol_sigma_r2"/>
</dbReference>
<dbReference type="InterPro" id="IPR013324">
    <property type="entry name" value="RNA_pol_sigma_r3/r4-like"/>
</dbReference>
<dbReference type="InterPro" id="IPR012760">
    <property type="entry name" value="RNA_pol_sigma_RpoD_C"/>
</dbReference>
<dbReference type="InterPro" id="IPR050239">
    <property type="entry name" value="Sigma-70_RNA_pol_init_factors"/>
</dbReference>
<dbReference type="InterPro" id="IPR028630">
    <property type="entry name" value="Sigma70_RpoD"/>
</dbReference>
<dbReference type="InterPro" id="IPR036388">
    <property type="entry name" value="WH-like_DNA-bd_sf"/>
</dbReference>
<dbReference type="NCBIfam" id="NF004208">
    <property type="entry name" value="PRK05658.1"/>
    <property type="match status" value="1"/>
</dbReference>
<dbReference type="NCBIfam" id="TIGR02393">
    <property type="entry name" value="RpoD_Cterm"/>
    <property type="match status" value="1"/>
</dbReference>
<dbReference type="NCBIfam" id="TIGR02937">
    <property type="entry name" value="sigma70-ECF"/>
    <property type="match status" value="1"/>
</dbReference>
<dbReference type="PANTHER" id="PTHR30603">
    <property type="entry name" value="RNA POLYMERASE SIGMA FACTOR RPO"/>
    <property type="match status" value="1"/>
</dbReference>
<dbReference type="PANTHER" id="PTHR30603:SF60">
    <property type="entry name" value="RNA POLYMERASE SIGMA FACTOR RPOD"/>
    <property type="match status" value="1"/>
</dbReference>
<dbReference type="Pfam" id="PF04546">
    <property type="entry name" value="Sigma70_ner"/>
    <property type="match status" value="1"/>
</dbReference>
<dbReference type="Pfam" id="PF03979">
    <property type="entry name" value="Sigma70_r1_1"/>
    <property type="match status" value="1"/>
</dbReference>
<dbReference type="Pfam" id="PF00140">
    <property type="entry name" value="Sigma70_r1_2"/>
    <property type="match status" value="1"/>
</dbReference>
<dbReference type="Pfam" id="PF04542">
    <property type="entry name" value="Sigma70_r2"/>
    <property type="match status" value="1"/>
</dbReference>
<dbReference type="Pfam" id="PF04539">
    <property type="entry name" value="Sigma70_r3"/>
    <property type="match status" value="1"/>
</dbReference>
<dbReference type="Pfam" id="PF04545">
    <property type="entry name" value="Sigma70_r4"/>
    <property type="match status" value="1"/>
</dbReference>
<dbReference type="PRINTS" id="PR00046">
    <property type="entry name" value="SIGMA70FCT"/>
</dbReference>
<dbReference type="SUPFAM" id="SSF88946">
    <property type="entry name" value="Sigma2 domain of RNA polymerase sigma factors"/>
    <property type="match status" value="1"/>
</dbReference>
<dbReference type="SUPFAM" id="SSF88659">
    <property type="entry name" value="Sigma3 and sigma4 domains of RNA polymerase sigma factors"/>
    <property type="match status" value="2"/>
</dbReference>
<dbReference type="PROSITE" id="PS00715">
    <property type="entry name" value="SIGMA70_1"/>
    <property type="match status" value="1"/>
</dbReference>
<dbReference type="PROSITE" id="PS00716">
    <property type="entry name" value="SIGMA70_2"/>
    <property type="match status" value="1"/>
</dbReference>
<comment type="function">
    <text evidence="1">Sigma factors are initiation factors that promote the attachment of RNA polymerase to specific initiation sites and are then released. This sigma factor is the primary sigma factor during exponential growth.</text>
</comment>
<comment type="subunit">
    <text evidence="1">Interacts transiently with the RNA polymerase catalytic core.</text>
</comment>
<comment type="subcellular location">
    <subcellularLocation>
        <location evidence="1">Cytoplasm</location>
    </subcellularLocation>
</comment>
<comment type="similarity">
    <text evidence="1">Belongs to the sigma-70 factor family. RpoD/SigA subfamily.</text>
</comment>
<gene>
    <name evidence="1" type="primary">rpoD</name>
</gene>
<protein>
    <recommendedName>
        <fullName evidence="1">RNA polymerase sigma factor RpoD</fullName>
    </recommendedName>
    <alternativeName>
        <fullName evidence="1">Sigma-70</fullName>
    </alternativeName>
</protein>
<organism>
    <name type="scientific">Pseudomonas protegens (strain DSM 19095 / LMG 27888 / CFBP 6595 / CHA0)</name>
    <dbReference type="NCBI Taxonomy" id="1124983"/>
    <lineage>
        <taxon>Bacteria</taxon>
        <taxon>Pseudomonadati</taxon>
        <taxon>Pseudomonadota</taxon>
        <taxon>Gammaproteobacteria</taxon>
        <taxon>Pseudomonadales</taxon>
        <taxon>Pseudomonadaceae</taxon>
        <taxon>Pseudomonas</taxon>
    </lineage>
</organism>
<accession>P52326</accession>
<evidence type="ECO:0000255" key="1">
    <source>
        <dbReference type="HAMAP-Rule" id="MF_00963"/>
    </source>
</evidence>
<evidence type="ECO:0000256" key="2">
    <source>
        <dbReference type="SAM" id="MobiDB-lite"/>
    </source>
</evidence>
<name>RPOD_PSEPH</name>
<reference key="1">
    <citation type="journal article" date="1995" name="J. Bacteriol.">
        <title>Amplification of the housekeeping sigma factor in Pseudomonas fluorescens CHA0 enhances antibiotic production and improves biocontrol abilities.</title>
        <authorList>
            <person name="Schnider U."/>
            <person name="Keel C."/>
            <person name="Blumer C."/>
            <person name="Troxler J."/>
            <person name="Defago G."/>
            <person name="Haas D."/>
        </authorList>
    </citation>
    <scope>NUCLEOTIDE SEQUENCE [GENOMIC DNA]</scope>
    <source>
        <strain>DSM 19095 / LMG 27888 / CFBP 6595 / CHA0</strain>
    </source>
</reference>
<keyword id="KW-0963">Cytoplasm</keyword>
<keyword id="KW-0238">DNA-binding</keyword>
<keyword id="KW-0731">Sigma factor</keyword>
<keyword id="KW-0804">Transcription</keyword>
<keyword id="KW-0805">Transcription regulation</keyword>